<proteinExistence type="evidence at protein level"/>
<dbReference type="EMBL" id="AY620415">
    <property type="protein sequence ID" value="AAT28675.1"/>
    <property type="molecule type" value="mRNA"/>
</dbReference>
<dbReference type="EMBL" id="AP014957">
    <property type="protein sequence ID" value="BAS74852.1"/>
    <property type="molecule type" value="Genomic_DNA"/>
</dbReference>
<dbReference type="EMBL" id="AK069158">
    <property type="protein sequence ID" value="BAG91290.1"/>
    <property type="molecule type" value="mRNA"/>
</dbReference>
<dbReference type="EMBL" id="AB051297">
    <property type="protein sequence ID" value="BAB72064.1"/>
    <property type="status" value="ALT_INIT"/>
    <property type="molecule type" value="mRNA"/>
</dbReference>
<dbReference type="EMBL" id="HM991167">
    <property type="protein sequence ID" value="AEF30410.1"/>
    <property type="molecule type" value="mRNA"/>
</dbReference>
<dbReference type="RefSeq" id="XP_015651146.1">
    <property type="nucleotide sequence ID" value="XM_015795660.1"/>
</dbReference>
<dbReference type="SMR" id="Q6IVC2"/>
<dbReference type="FunCoup" id="Q6IVC2">
    <property type="interactions" value="830"/>
</dbReference>
<dbReference type="STRING" id="39947.Q6IVC2"/>
<dbReference type="PaxDb" id="39947-Q6IVC2"/>
<dbReference type="EnsemblPlants" id="Os01t0808100-02">
    <molecule id="Q6IVC2-1"/>
    <property type="protein sequence ID" value="Os01t0808100-02"/>
    <property type="gene ID" value="Os01g0808100"/>
</dbReference>
<dbReference type="Gramene" id="Os01t0808100-02">
    <molecule id="Q6IVC2-1"/>
    <property type="protein sequence ID" value="Os01t0808100-02"/>
    <property type="gene ID" value="Os01g0808100"/>
</dbReference>
<dbReference type="eggNOG" id="ENOG502QU32">
    <property type="taxonomic scope" value="Eukaryota"/>
</dbReference>
<dbReference type="InParanoid" id="Q6IVC2"/>
<dbReference type="OMA" id="RIYYYYI"/>
<dbReference type="OrthoDB" id="2015618at2759"/>
<dbReference type="Proteomes" id="UP000059680">
    <property type="component" value="Chromosome 1"/>
</dbReference>
<dbReference type="GO" id="GO:0005634">
    <property type="term" value="C:nucleus"/>
    <property type="evidence" value="ECO:0007669"/>
    <property type="project" value="UniProtKB-SubCell"/>
</dbReference>
<dbReference type="GO" id="GO:0003700">
    <property type="term" value="F:DNA-binding transcription factor activity"/>
    <property type="evidence" value="ECO:0007669"/>
    <property type="project" value="InterPro"/>
</dbReference>
<dbReference type="GO" id="GO:0043565">
    <property type="term" value="F:sequence-specific DNA binding"/>
    <property type="evidence" value="ECO:0007669"/>
    <property type="project" value="InterPro"/>
</dbReference>
<dbReference type="GO" id="GO:0006952">
    <property type="term" value="P:defense response"/>
    <property type="evidence" value="ECO:0007669"/>
    <property type="project" value="UniProtKB-KW"/>
</dbReference>
<dbReference type="GO" id="GO:0006351">
    <property type="term" value="P:DNA-templated transcription"/>
    <property type="evidence" value="ECO:0007669"/>
    <property type="project" value="InterPro"/>
</dbReference>
<dbReference type="CDD" id="cd14708">
    <property type="entry name" value="bZIP_HBP1b-like"/>
    <property type="match status" value="1"/>
</dbReference>
<dbReference type="FunFam" id="1.20.5.170:FF:000019">
    <property type="entry name" value="BZIP family transcription factor"/>
    <property type="match status" value="1"/>
</dbReference>
<dbReference type="Gene3D" id="1.20.5.170">
    <property type="match status" value="1"/>
</dbReference>
<dbReference type="InterPro" id="IPR004827">
    <property type="entry name" value="bZIP"/>
</dbReference>
<dbReference type="InterPro" id="IPR046347">
    <property type="entry name" value="bZIP_sf"/>
</dbReference>
<dbReference type="InterPro" id="IPR025422">
    <property type="entry name" value="TGA_domain"/>
</dbReference>
<dbReference type="PANTHER" id="PTHR45693">
    <property type="entry name" value="TRANSCRIPTION FACTOR TGA9"/>
    <property type="match status" value="1"/>
</dbReference>
<dbReference type="PANTHER" id="PTHR45693:SF48">
    <property type="entry name" value="TRANSCRIPTION FACTOR TGAL1"/>
    <property type="match status" value="1"/>
</dbReference>
<dbReference type="Pfam" id="PF00170">
    <property type="entry name" value="bZIP_1"/>
    <property type="match status" value="1"/>
</dbReference>
<dbReference type="Pfam" id="PF14144">
    <property type="entry name" value="DOG1"/>
    <property type="match status" value="1"/>
</dbReference>
<dbReference type="SMART" id="SM00338">
    <property type="entry name" value="BRLZ"/>
    <property type="match status" value="1"/>
</dbReference>
<dbReference type="SUPFAM" id="SSF57959">
    <property type="entry name" value="Leucine zipper domain"/>
    <property type="match status" value="1"/>
</dbReference>
<dbReference type="PROSITE" id="PS50217">
    <property type="entry name" value="BZIP"/>
    <property type="match status" value="1"/>
</dbReference>
<dbReference type="PROSITE" id="PS00036">
    <property type="entry name" value="BZIP_BASIC"/>
    <property type="match status" value="1"/>
</dbReference>
<dbReference type="PROSITE" id="PS51806">
    <property type="entry name" value="DOG1"/>
    <property type="match status" value="1"/>
</dbReference>
<gene>
    <name evidence="7" type="primary">TGAL1</name>
    <name evidence="7" type="synonym">TGAL2</name>
    <name evidence="10" type="ordered locus">Os01g0808100</name>
    <name evidence="8" type="ordered locus">LOC_Os01g59350</name>
</gene>
<sequence>MEGGRLGGAAASASAAAAADARGGMSGFAAPQHAIHTNLNNVQPTQVTDFGALAQSAGFRIEDLANLSTNGLFNLKSNAHTIINDPLQFENYVKSISPSNITTTATVTVVDPQTLVPQKGAQLNLVTIRTGNVENWGESTIADTSPRTDTSTDPDTDERNQMFEQGQLAAPTASDSSDRSKDKLDHKTLRRLAQNREAARKSRLRKKAYIQNLESSRLKLTQIEQELQRARQQGIFISTSSDQSHSASGNGALAFDMEYARWLEEHNKHINELRAAVNAHAGDNDLKSTVDSIMAHYNEIFKLKGVAAKADVFHVLSGMWKTPAERCFMWLGGFRSSELLKLLAGQLEPLTEQQLAGIANLQQSSQQAEDALSQGMEALQQSLAETLASGSLGPAGSSGNVANYMGQMAMAMGKLGTLENFLRQADNLRLQTLQQMQRILTTRQSARALLAISDYFSRLRALSSLWLARPRE</sequence>
<evidence type="ECO:0000250" key="1">
    <source>
        <dbReference type="UniProtKB" id="Q7X993"/>
    </source>
</evidence>
<evidence type="ECO:0000255" key="2">
    <source>
        <dbReference type="PROSITE-ProRule" id="PRU00978"/>
    </source>
</evidence>
<evidence type="ECO:0000255" key="3">
    <source>
        <dbReference type="PROSITE-ProRule" id="PRU01147"/>
    </source>
</evidence>
<evidence type="ECO:0000256" key="4">
    <source>
        <dbReference type="SAM" id="MobiDB-lite"/>
    </source>
</evidence>
<evidence type="ECO:0000269" key="5">
    <source>
    </source>
</evidence>
<evidence type="ECO:0000303" key="6">
    <source>
    </source>
</evidence>
<evidence type="ECO:0000303" key="7">
    <source>
    </source>
</evidence>
<evidence type="ECO:0000305" key="8"/>
<evidence type="ECO:0000312" key="9">
    <source>
        <dbReference type="EMBL" id="BAB72064.1"/>
    </source>
</evidence>
<evidence type="ECO:0000312" key="10">
    <source>
        <dbReference type="EMBL" id="BAS74852.1"/>
    </source>
</evidence>
<organism>
    <name type="scientific">Oryza sativa subsp. japonica</name>
    <name type="common">Rice</name>
    <dbReference type="NCBI Taxonomy" id="39947"/>
    <lineage>
        <taxon>Eukaryota</taxon>
        <taxon>Viridiplantae</taxon>
        <taxon>Streptophyta</taxon>
        <taxon>Embryophyta</taxon>
        <taxon>Tracheophyta</taxon>
        <taxon>Spermatophyta</taxon>
        <taxon>Magnoliopsida</taxon>
        <taxon>Liliopsida</taxon>
        <taxon>Poales</taxon>
        <taxon>Poaceae</taxon>
        <taxon>BOP clade</taxon>
        <taxon>Oryzoideae</taxon>
        <taxon>Oryzeae</taxon>
        <taxon>Oryzinae</taxon>
        <taxon>Oryza</taxon>
        <taxon>Oryza sativa</taxon>
    </lineage>
</organism>
<accession>Q6IVC2</accession>
<accession>B7EFZ3</accession>
<accession>G0X430</accession>
<accession>Q8W5R7</accession>
<protein>
    <recommendedName>
        <fullName evidence="8">Transcription factor TGAL1</fullName>
    </recommendedName>
    <alternativeName>
        <fullName evidence="9">OsNIF4</fullName>
    </alternativeName>
    <alternativeName>
        <fullName evidence="6">bZIP transcription factor 8</fullName>
        <shortName evidence="6">OsbZIP08</shortName>
    </alternativeName>
</protein>
<feature type="chain" id="PRO_0000437016" description="Transcription factor TGAL1">
    <location>
        <begin position="1"/>
        <end position="472"/>
    </location>
</feature>
<feature type="domain" description="bZIP" evidence="2">
    <location>
        <begin position="185"/>
        <end position="229"/>
    </location>
</feature>
<feature type="domain" description="DOG1" evidence="3">
    <location>
        <begin position="252"/>
        <end position="469"/>
    </location>
</feature>
<feature type="region of interest" description="Disordered" evidence="4">
    <location>
        <begin position="136"/>
        <end position="190"/>
    </location>
</feature>
<feature type="region of interest" description="Basic motif" evidence="2">
    <location>
        <begin position="187"/>
        <end position="207"/>
    </location>
</feature>
<feature type="region of interest" description="Leucine-zipper" evidence="2">
    <location>
        <begin position="213"/>
        <end position="227"/>
    </location>
</feature>
<feature type="compositionally biased region" description="Low complexity" evidence="4">
    <location>
        <begin position="143"/>
        <end position="153"/>
    </location>
</feature>
<feature type="compositionally biased region" description="Basic and acidic residues" evidence="4">
    <location>
        <begin position="176"/>
        <end position="187"/>
    </location>
</feature>
<feature type="splice variant" id="VSP_058479" description="In isoform 2.">
    <original>LLAGQLEPLTEQQLAGIANLQQS</original>
    <variation>VRIYYYYIAPTYFEASPGGKMLT</variation>
    <location>
        <begin position="342"/>
        <end position="364"/>
    </location>
</feature>
<feature type="splice variant" id="VSP_058480" description="In isoform 2.">
    <location>
        <begin position="365"/>
        <end position="472"/>
    </location>
</feature>
<feature type="sequence conflict" description="In Ref. 1; AAT28675." evidence="8" ref="1">
    <original>M</original>
    <variation>MM</variation>
    <location>
        <position position="1"/>
    </location>
</feature>
<feature type="sequence conflict" description="In Ref. 6; AEF30410." evidence="8" ref="6">
    <original>G</original>
    <variation>R</variation>
    <location>
        <position position="251"/>
    </location>
</feature>
<feature type="sequence conflict" description="In Ref. 6; AEF30410." evidence="8" ref="6">
    <original>K</original>
    <variation>E</variation>
    <location>
        <position position="287"/>
    </location>
</feature>
<reference key="1">
    <citation type="submission" date="2004-04" db="EMBL/GenBank/DDBJ databases">
        <title>Molecular cloning and expression of a cDNA encoding a bZIP protein.</title>
        <authorList>
            <person name="Meng X.-B."/>
            <person name="Lin R.-M."/>
            <person name="Wang M."/>
            <person name="Zhao W.-S."/>
            <person name="Peng Y.-L."/>
        </authorList>
    </citation>
    <scope>NUCLEOTIDE SEQUENCE [MRNA] (ISOFORM 1)</scope>
</reference>
<reference key="2">
    <citation type="journal article" date="2005" name="Nature">
        <title>The map-based sequence of the rice genome.</title>
        <authorList>
            <consortium name="International rice genome sequencing project (IRGSP)"/>
        </authorList>
    </citation>
    <scope>NUCLEOTIDE SEQUENCE [LARGE SCALE GENOMIC DNA]</scope>
    <source>
        <strain>cv. Nipponbare</strain>
    </source>
</reference>
<reference key="3">
    <citation type="journal article" date="2013" name="Rice">
        <title>Improvement of the Oryza sativa Nipponbare reference genome using next generation sequence and optical map data.</title>
        <authorList>
            <person name="Kawahara Y."/>
            <person name="de la Bastide M."/>
            <person name="Hamilton J.P."/>
            <person name="Kanamori H."/>
            <person name="McCombie W.R."/>
            <person name="Ouyang S."/>
            <person name="Schwartz D.C."/>
            <person name="Tanaka T."/>
            <person name="Wu J."/>
            <person name="Zhou S."/>
            <person name="Childs K.L."/>
            <person name="Davidson R.M."/>
            <person name="Lin H."/>
            <person name="Quesada-Ocampo L."/>
            <person name="Vaillancourt B."/>
            <person name="Sakai H."/>
            <person name="Lee S.S."/>
            <person name="Kim J."/>
            <person name="Numa H."/>
            <person name="Itoh T."/>
            <person name="Buell C.R."/>
            <person name="Matsumoto T."/>
        </authorList>
    </citation>
    <scope>GENOME REANNOTATION</scope>
    <source>
        <strain>cv. Nipponbare</strain>
    </source>
</reference>
<reference key="4">
    <citation type="journal article" date="2003" name="Science">
        <title>Collection, mapping, and annotation of over 28,000 cDNA clones from japonica rice.</title>
        <authorList>
            <consortium name="The rice full-length cDNA consortium"/>
        </authorList>
    </citation>
    <scope>NUCLEOTIDE SEQUENCE [LARGE SCALE MRNA] (ISOFORM 2)</scope>
    <source>
        <strain>cv. Nipponbare</strain>
    </source>
</reference>
<reference key="5">
    <citation type="submission" date="2001-11" db="EMBL/GenBank/DDBJ databases">
        <title>cDNA cloning of bZIP transcription factors from rice.</title>
        <authorList>
            <person name="Yokoyama T."/>
            <person name="Motoyama T."/>
            <person name="Yoneyama K."/>
            <person name="Yamaguchi I."/>
        </authorList>
    </citation>
    <scope>NUCLEOTIDE SEQUENCE [MRNA] OF 109-472 (ISOFORM 1)</scope>
</reference>
<reference key="6">
    <citation type="submission" date="2010-07" db="EMBL/GenBank/DDBJ databases">
        <title>Oryza sativa japonica group cultivar Dongjin putative TGA2-like protein 2 mRNA.</title>
        <authorList>
            <person name="Moon S.-J."/>
            <person name="Shin D."/>
            <person name="Kim B.-G."/>
            <person name="Park S.R."/>
            <person name="Byun M.-O."/>
        </authorList>
    </citation>
    <scope>NUCLEOTIDE SEQUENCE [MRNA] OF 141-472 (ISOFORM 1)</scope>
    <source>
        <strain>cv. Dongjin</strain>
    </source>
</reference>
<reference key="7">
    <citation type="journal article" date="2008" name="Plant Physiol.">
        <title>Genomic survey and gene expression analysis of the basic leucine zipper transcription factor family in rice.</title>
        <authorList>
            <person name="Nijhawan A."/>
            <person name="Jain M."/>
            <person name="Tyagi A.K."/>
            <person name="Khurana J.P."/>
        </authorList>
    </citation>
    <scope>GENE FAMILY</scope>
    <scope>NOMENCLATURE</scope>
</reference>
<reference key="8">
    <citation type="journal article" date="2014" name="BMC Genomics">
        <title>Interaction specificity and coexpression of rice NPR1 homologs 1 and 3 (NH1 and NH3), TGA transcription factors and negative regulator of resistance (NRR) proteins.</title>
        <authorList>
            <person name="Chern M."/>
            <person name="Bai W."/>
            <person name="Ruan D."/>
            <person name="Oh T."/>
            <person name="Chen X."/>
            <person name="Ronald P.C."/>
        </authorList>
    </citation>
    <scope>INTERACTION WITH NPR1/NH1; NPR2/NH2 AND NPR3/NH3</scope>
</reference>
<comment type="function">
    <text evidence="1">Transcriptional regulator involved in defense response.</text>
</comment>
<comment type="subunit">
    <text evidence="5">Isoforms 1 and 2 interact with NPR2/NH2. Isoform 2 interacts with NPR1/NH1 and NPR3/NH3.</text>
</comment>
<comment type="subcellular location">
    <subcellularLocation>
        <location evidence="2">Nucleus</location>
    </subcellularLocation>
</comment>
<comment type="alternative products">
    <event type="alternative splicing"/>
    <isoform>
        <id>Q6IVC2-1</id>
        <name>1</name>
        <sequence type="displayed"/>
    </isoform>
    <isoform>
        <id>Q6IVC2-2</id>
        <name>2</name>
        <sequence type="described" ref="VSP_058479 VSP_058480"/>
    </isoform>
</comment>
<comment type="similarity">
    <text evidence="8">Belongs to the bZIP family.</text>
</comment>
<comment type="sequence caution" evidence="8">
    <conflict type="erroneous initiation">
        <sequence resource="EMBL-CDS" id="BAB72064"/>
    </conflict>
    <text>Truncated N-terminus.</text>
</comment>
<keyword id="KW-0025">Alternative splicing</keyword>
<keyword id="KW-0238">DNA-binding</keyword>
<keyword id="KW-0539">Nucleus</keyword>
<keyword id="KW-0611">Plant defense</keyword>
<keyword id="KW-1185">Reference proteome</keyword>
<keyword id="KW-0804">Transcription</keyword>
<keyword id="KW-0805">Transcription regulation</keyword>
<name>TGAL1_ORYSJ</name>